<name>M280_ARATH</name>
<geneLocation type="mitochondrion"/>
<feature type="chain" id="PRO_0000196763" description="Putative uncharacterized mitochondrial protein AtMg00280">
    <location>
        <begin position="1"/>
        <end position="110"/>
    </location>
</feature>
<feature type="sequence conflict" description="In Ref. 3; AC006225." evidence="1" ref="3">
    <original>A</original>
    <variation>P</variation>
    <location>
        <position position="76"/>
    </location>
</feature>
<protein>
    <recommendedName>
        <fullName>Putative uncharacterized mitochondrial protein AtMg00280</fullName>
    </recommendedName>
    <alternativeName>
        <fullName>ORF110a</fullName>
    </alternativeName>
</protein>
<accession>P93292</accession>
<sequence>MNNAAKRADCWFGAKNYGRAVYECLRGGLYFTKDDENVNSQPFMRWRDRFLFCAEAVYKAQAETGGIKGHYLNATAGTCEEMIKRAVFARELGVPIVMHDYLNRGIHRKY</sequence>
<dbReference type="EMBL" id="Y08501">
    <property type="protein sequence ID" value="CAA69770.1"/>
    <property type="molecule type" value="Genomic_DNA"/>
</dbReference>
<dbReference type="EMBL" id="BK010421">
    <property type="status" value="NOT_ANNOTATED_CDS"/>
    <property type="molecule type" value="Genomic_DNA"/>
</dbReference>
<dbReference type="EMBL" id="AC006225">
    <property type="status" value="NOT_ANNOTATED_CDS"/>
    <property type="molecule type" value="Genomic_DNA"/>
</dbReference>
<dbReference type="RefSeq" id="NP_085496.1">
    <property type="nucleotide sequence ID" value="NC_001284.2"/>
</dbReference>
<dbReference type="SMR" id="P93292"/>
<dbReference type="BioGRID" id="30866">
    <property type="interactions" value="6"/>
</dbReference>
<dbReference type="FunCoup" id="P93292">
    <property type="interactions" value="1"/>
</dbReference>
<dbReference type="STRING" id="3702.P93292"/>
<dbReference type="PaxDb" id="3702-ATMG00280.1"/>
<dbReference type="ProteomicsDB" id="238755"/>
<dbReference type="EnsemblPlants" id="ATMG00280.1">
    <property type="protein sequence ID" value="ATMG00280.1"/>
    <property type="gene ID" value="ATMG00280"/>
</dbReference>
<dbReference type="Gramene" id="ATMG00280.1">
    <property type="protein sequence ID" value="ATMG00280.1"/>
    <property type="gene ID" value="ATMG00280"/>
</dbReference>
<dbReference type="Araport" id="ATMG00280"/>
<dbReference type="TAIR" id="ATMG00280">
    <property type="gene designation" value="ORF110A"/>
</dbReference>
<dbReference type="eggNOG" id="ENOG502QTI9">
    <property type="taxonomic scope" value="Eukaryota"/>
</dbReference>
<dbReference type="HOGENOM" id="CLU_104806_1_0_1"/>
<dbReference type="InParanoid" id="P93292"/>
<dbReference type="OMA" id="ISAWRAC"/>
<dbReference type="PhylomeDB" id="P93292"/>
<dbReference type="BioCyc" id="ARA:AT2G07732-MONOMER"/>
<dbReference type="BioCyc" id="ARA:ATMG00280-MONOMER"/>
<dbReference type="Proteomes" id="UP000006548">
    <property type="component" value="Mitochondrion MT"/>
</dbReference>
<dbReference type="GO" id="GO:0005739">
    <property type="term" value="C:mitochondrion"/>
    <property type="evidence" value="ECO:0007669"/>
    <property type="project" value="UniProtKB-SubCell"/>
</dbReference>
<dbReference type="GO" id="GO:0009536">
    <property type="term" value="C:plastid"/>
    <property type="evidence" value="ECO:0007005"/>
    <property type="project" value="TAIR"/>
</dbReference>
<dbReference type="GO" id="GO:0000287">
    <property type="term" value="F:magnesium ion binding"/>
    <property type="evidence" value="ECO:0007669"/>
    <property type="project" value="InterPro"/>
</dbReference>
<dbReference type="GO" id="GO:0016984">
    <property type="term" value="F:ribulose-bisphosphate carboxylase activity"/>
    <property type="evidence" value="ECO:0007669"/>
    <property type="project" value="InterPro"/>
</dbReference>
<dbReference type="Gene3D" id="3.20.20.110">
    <property type="entry name" value="Ribulose bisphosphate carboxylase, large subunit, C-terminal domain"/>
    <property type="match status" value="1"/>
</dbReference>
<dbReference type="InterPro" id="IPR033966">
    <property type="entry name" value="RuBisCO"/>
</dbReference>
<dbReference type="InterPro" id="IPR000685">
    <property type="entry name" value="RuBisCO_lsu_C"/>
</dbReference>
<dbReference type="InterPro" id="IPR036376">
    <property type="entry name" value="RuBisCO_lsu_C_sf"/>
</dbReference>
<dbReference type="PANTHER" id="PTHR42704">
    <property type="entry name" value="RIBULOSE BISPHOSPHATE CARBOXYLASE"/>
    <property type="match status" value="1"/>
</dbReference>
<dbReference type="PANTHER" id="PTHR42704:SF16">
    <property type="entry name" value="RIBULOSE BISPHOSPHATE CARBOXYLASE LARGE CHAIN"/>
    <property type="match status" value="1"/>
</dbReference>
<dbReference type="Pfam" id="PF00016">
    <property type="entry name" value="RuBisCO_large"/>
    <property type="match status" value="1"/>
</dbReference>
<dbReference type="SUPFAM" id="SSF51649">
    <property type="entry name" value="RuBisCo, C-terminal domain"/>
    <property type="match status" value="1"/>
</dbReference>
<comment type="subcellular location">
    <subcellularLocation>
        <location evidence="1">Mitochondrion</location>
    </subcellularLocation>
</comment>
<comment type="miscellaneous">
    <text>Seems to correspond to a fragment of a former RuBisCO gene.</text>
</comment>
<comment type="miscellaneous">
    <text>A stretch of 270 kb of the mitochondrial genome is duplicated within the centromere of chromosome 2 resulting in the duplication of the gene. The expression of the duplicated gene (At2g07732) is not demonstrated.</text>
</comment>
<comment type="similarity">
    <text evidence="1">Belongs to the RuBisCO large chain family.</text>
</comment>
<comment type="caution">
    <text evidence="1">Could be the product of a pseudogene.</text>
</comment>
<comment type="sequence caution" evidence="1">
    <conflict type="frameshift">
        <sequence resource="EMBL" id="AC006225"/>
    </conflict>
</comment>
<evidence type="ECO:0000305" key="1"/>
<gene>
    <name type="ordered locus">AtMg00280</name>
</gene>
<keyword id="KW-0496">Mitochondrion</keyword>
<keyword id="KW-1185">Reference proteome</keyword>
<proteinExistence type="uncertain"/>
<reference key="1">
    <citation type="journal article" date="1997" name="Nat. Genet.">
        <title>The mitochondrial genome of Arabidopsis thaliana contains 57 genes in 366,924 nucleotides.</title>
        <authorList>
            <person name="Unseld M."/>
            <person name="Marienfeld J.R."/>
            <person name="Brandt P."/>
            <person name="Brennicke A."/>
        </authorList>
    </citation>
    <scope>NUCLEOTIDE SEQUENCE [LARGE SCALE GENOMIC DNA]</scope>
    <source>
        <strain>cv. C24</strain>
    </source>
</reference>
<reference key="2">
    <citation type="journal article" date="2018" name="Plant Cell">
        <title>Correction of persistent errors in Arabidopsis reference mitochondrial genomes.</title>
        <authorList>
            <person name="Sloan D.B."/>
            <person name="Wu Z."/>
            <person name="Sharbrough J."/>
        </authorList>
    </citation>
    <scope>NUCLEOTIDE SEQUENCE [LARGE SCALE GENOMIC DNA]</scope>
    <source>
        <strain>cv. Columbia</strain>
    </source>
</reference>
<reference key="3">
    <citation type="journal article" date="1999" name="Nature">
        <title>Sequence and analysis of chromosome 2 of the plant Arabidopsis thaliana.</title>
        <authorList>
            <person name="Lin X."/>
            <person name="Kaul S."/>
            <person name="Rounsley S.D."/>
            <person name="Shea T.P."/>
            <person name="Benito M.-I."/>
            <person name="Town C.D."/>
            <person name="Fujii C.Y."/>
            <person name="Mason T.M."/>
            <person name="Bowman C.L."/>
            <person name="Barnstead M.E."/>
            <person name="Feldblyum T.V."/>
            <person name="Buell C.R."/>
            <person name="Ketchum K.A."/>
            <person name="Lee J.J."/>
            <person name="Ronning C.M."/>
            <person name="Koo H.L."/>
            <person name="Moffat K.S."/>
            <person name="Cronin L.A."/>
            <person name="Shen M."/>
            <person name="Pai G."/>
            <person name="Van Aken S."/>
            <person name="Umayam L."/>
            <person name="Tallon L.J."/>
            <person name="Gill J.E."/>
            <person name="Adams M.D."/>
            <person name="Carrera A.J."/>
            <person name="Creasy T.H."/>
            <person name="Goodman H.M."/>
            <person name="Somerville C.R."/>
            <person name="Copenhaver G.P."/>
            <person name="Preuss D."/>
            <person name="Nierman W.C."/>
            <person name="White O."/>
            <person name="Eisen J.A."/>
            <person name="Salzberg S.L."/>
            <person name="Fraser C.M."/>
            <person name="Venter J.C."/>
        </authorList>
    </citation>
    <scope>NUCLEOTIDE SEQUENCE [LARGE SCALE GENOMIC DNA] (AT2G07732)</scope>
    <source>
        <strain>cv. Columbia</strain>
    </source>
</reference>
<organism>
    <name type="scientific">Arabidopsis thaliana</name>
    <name type="common">Mouse-ear cress</name>
    <dbReference type="NCBI Taxonomy" id="3702"/>
    <lineage>
        <taxon>Eukaryota</taxon>
        <taxon>Viridiplantae</taxon>
        <taxon>Streptophyta</taxon>
        <taxon>Embryophyta</taxon>
        <taxon>Tracheophyta</taxon>
        <taxon>Spermatophyta</taxon>
        <taxon>Magnoliopsida</taxon>
        <taxon>eudicotyledons</taxon>
        <taxon>Gunneridae</taxon>
        <taxon>Pentapetalae</taxon>
        <taxon>rosids</taxon>
        <taxon>malvids</taxon>
        <taxon>Brassicales</taxon>
        <taxon>Brassicaceae</taxon>
        <taxon>Camelineae</taxon>
        <taxon>Arabidopsis</taxon>
    </lineage>
</organism>